<accession>Q0TNY3</accession>
<evidence type="ECO:0000255" key="1">
    <source>
        <dbReference type="HAMAP-Rule" id="MF_00555"/>
    </source>
</evidence>
<sequence>MEKLFIPKGYKPLLSLRETEVAIKELKDFFEDSLAKNLNLTRVSAPLFVNKGSGLNDDLNGIERPVSFDMKAMPEFNIQIVHSLAKWKRLALHRYEFEHGEGLYTDMNAIRRDEDLDNIHSIYVDQWDWEKIIDKEERNLETLKETVRSIYGTFKATEDFIVAKYPHIEKILPEDITFITSQELEDRYPDLTSKERETAICKEFGAVFIIGIGGKLASGEKHDDRSPDYDDWTLNGDLLFYYPLFDEAVELSSMGIRVDEESLLKQLKIAECEERKELPFHQMLLEGKLPYTIGGGIGQSRICMFFLRKAHIGEVQASMWDEDMIRTCEENNIHLL</sequence>
<name>ASNA_CLOP1</name>
<reference key="1">
    <citation type="journal article" date="2006" name="Genome Res.">
        <title>Skewed genomic variability in strains of the toxigenic bacterial pathogen, Clostridium perfringens.</title>
        <authorList>
            <person name="Myers G.S.A."/>
            <person name="Rasko D.A."/>
            <person name="Cheung J.K."/>
            <person name="Ravel J."/>
            <person name="Seshadri R."/>
            <person name="DeBoy R.T."/>
            <person name="Ren Q."/>
            <person name="Varga J."/>
            <person name="Awad M.M."/>
            <person name="Brinkac L.M."/>
            <person name="Daugherty S.C."/>
            <person name="Haft D.H."/>
            <person name="Dodson R.J."/>
            <person name="Madupu R."/>
            <person name="Nelson W.C."/>
            <person name="Rosovitz M.J."/>
            <person name="Sullivan S.A."/>
            <person name="Khouri H."/>
            <person name="Dimitrov G.I."/>
            <person name="Watkins K.L."/>
            <person name="Mulligan S."/>
            <person name="Benton J."/>
            <person name="Radune D."/>
            <person name="Fisher D.J."/>
            <person name="Atkins H.S."/>
            <person name="Hiscox T."/>
            <person name="Jost B.H."/>
            <person name="Billington S.J."/>
            <person name="Songer J.G."/>
            <person name="McClane B.A."/>
            <person name="Titball R.W."/>
            <person name="Rood J.I."/>
            <person name="Melville S.B."/>
            <person name="Paulsen I.T."/>
        </authorList>
    </citation>
    <scope>NUCLEOTIDE SEQUENCE [LARGE SCALE GENOMIC DNA]</scope>
    <source>
        <strain>ATCC 13124 / DSM 756 / JCM 1290 / NCIMB 6125 / NCTC 8237 / S 107 / Type A</strain>
    </source>
</reference>
<comment type="catalytic activity">
    <reaction evidence="1">
        <text>L-aspartate + NH4(+) + ATP = L-asparagine + AMP + diphosphate + H(+)</text>
        <dbReference type="Rhea" id="RHEA:11372"/>
        <dbReference type="ChEBI" id="CHEBI:15378"/>
        <dbReference type="ChEBI" id="CHEBI:28938"/>
        <dbReference type="ChEBI" id="CHEBI:29991"/>
        <dbReference type="ChEBI" id="CHEBI:30616"/>
        <dbReference type="ChEBI" id="CHEBI:33019"/>
        <dbReference type="ChEBI" id="CHEBI:58048"/>
        <dbReference type="ChEBI" id="CHEBI:456215"/>
        <dbReference type="EC" id="6.3.1.1"/>
    </reaction>
</comment>
<comment type="pathway">
    <text evidence="1">Amino-acid biosynthesis; L-asparagine biosynthesis; L-asparagine from L-aspartate (ammonia route): step 1/1.</text>
</comment>
<comment type="subcellular location">
    <subcellularLocation>
        <location evidence="1">Cytoplasm</location>
    </subcellularLocation>
</comment>
<comment type="similarity">
    <text evidence="1">Belongs to the class-II aminoacyl-tRNA synthetase family. AsnA subfamily.</text>
</comment>
<dbReference type="EC" id="6.3.1.1" evidence="1"/>
<dbReference type="EMBL" id="CP000246">
    <property type="protein sequence ID" value="ABG83177.1"/>
    <property type="molecule type" value="Genomic_DNA"/>
</dbReference>
<dbReference type="RefSeq" id="WP_003461748.1">
    <property type="nucleotide sequence ID" value="NC_008261.1"/>
</dbReference>
<dbReference type="SMR" id="Q0TNY3"/>
<dbReference type="STRING" id="195103.CPF_2233"/>
<dbReference type="PaxDb" id="195103-CPF_2233"/>
<dbReference type="KEGG" id="cpf:CPF_2233"/>
<dbReference type="eggNOG" id="COG2502">
    <property type="taxonomic scope" value="Bacteria"/>
</dbReference>
<dbReference type="HOGENOM" id="CLU_071543_0_0_9"/>
<dbReference type="UniPathway" id="UPA00134">
    <property type="reaction ID" value="UER00194"/>
</dbReference>
<dbReference type="Proteomes" id="UP000001823">
    <property type="component" value="Chromosome"/>
</dbReference>
<dbReference type="GO" id="GO:0005829">
    <property type="term" value="C:cytosol"/>
    <property type="evidence" value="ECO:0007669"/>
    <property type="project" value="TreeGrafter"/>
</dbReference>
<dbReference type="GO" id="GO:0004071">
    <property type="term" value="F:aspartate-ammonia ligase activity"/>
    <property type="evidence" value="ECO:0007669"/>
    <property type="project" value="UniProtKB-UniRule"/>
</dbReference>
<dbReference type="GO" id="GO:0005524">
    <property type="term" value="F:ATP binding"/>
    <property type="evidence" value="ECO:0007669"/>
    <property type="project" value="UniProtKB-UniRule"/>
</dbReference>
<dbReference type="GO" id="GO:0140096">
    <property type="term" value="F:catalytic activity, acting on a protein"/>
    <property type="evidence" value="ECO:0007669"/>
    <property type="project" value="UniProtKB-ARBA"/>
</dbReference>
<dbReference type="GO" id="GO:0016740">
    <property type="term" value="F:transferase activity"/>
    <property type="evidence" value="ECO:0007669"/>
    <property type="project" value="UniProtKB-ARBA"/>
</dbReference>
<dbReference type="GO" id="GO:0070981">
    <property type="term" value="P:L-asparagine biosynthetic process"/>
    <property type="evidence" value="ECO:0007669"/>
    <property type="project" value="UniProtKB-UniRule"/>
</dbReference>
<dbReference type="CDD" id="cd00645">
    <property type="entry name" value="AsnA"/>
    <property type="match status" value="1"/>
</dbReference>
<dbReference type="Gene3D" id="3.30.930.10">
    <property type="entry name" value="Bira Bifunctional Protein, Domain 2"/>
    <property type="match status" value="1"/>
</dbReference>
<dbReference type="HAMAP" id="MF_00555">
    <property type="entry name" value="AsnA"/>
    <property type="match status" value="1"/>
</dbReference>
<dbReference type="InterPro" id="IPR006195">
    <property type="entry name" value="aa-tRNA-synth_II"/>
</dbReference>
<dbReference type="InterPro" id="IPR045864">
    <property type="entry name" value="aa-tRNA-synth_II/BPL/LPL"/>
</dbReference>
<dbReference type="InterPro" id="IPR004618">
    <property type="entry name" value="AsnA"/>
</dbReference>
<dbReference type="NCBIfam" id="TIGR00669">
    <property type="entry name" value="asnA"/>
    <property type="match status" value="1"/>
</dbReference>
<dbReference type="PANTHER" id="PTHR30073">
    <property type="entry name" value="ASPARTATE--AMMONIA LIGASE"/>
    <property type="match status" value="1"/>
</dbReference>
<dbReference type="PANTHER" id="PTHR30073:SF5">
    <property type="entry name" value="ASPARTATE--AMMONIA LIGASE"/>
    <property type="match status" value="1"/>
</dbReference>
<dbReference type="Pfam" id="PF03590">
    <property type="entry name" value="AsnA"/>
    <property type="match status" value="1"/>
</dbReference>
<dbReference type="PIRSF" id="PIRSF001555">
    <property type="entry name" value="Asp_ammon_ligase"/>
    <property type="match status" value="1"/>
</dbReference>
<dbReference type="SUPFAM" id="SSF55681">
    <property type="entry name" value="Class II aaRS and biotin synthetases"/>
    <property type="match status" value="1"/>
</dbReference>
<dbReference type="PROSITE" id="PS50862">
    <property type="entry name" value="AA_TRNA_LIGASE_II"/>
    <property type="match status" value="1"/>
</dbReference>
<organism>
    <name type="scientific">Clostridium perfringens (strain ATCC 13124 / DSM 756 / JCM 1290 / NCIMB 6125 / NCTC 8237 / Type A)</name>
    <dbReference type="NCBI Taxonomy" id="195103"/>
    <lineage>
        <taxon>Bacteria</taxon>
        <taxon>Bacillati</taxon>
        <taxon>Bacillota</taxon>
        <taxon>Clostridia</taxon>
        <taxon>Eubacteriales</taxon>
        <taxon>Clostridiaceae</taxon>
        <taxon>Clostridium</taxon>
    </lineage>
</organism>
<protein>
    <recommendedName>
        <fullName evidence="1">Aspartate--ammonia ligase</fullName>
        <ecNumber evidence="1">6.3.1.1</ecNumber>
    </recommendedName>
    <alternativeName>
        <fullName evidence="1">Asparagine synthetase A</fullName>
    </alternativeName>
</protein>
<keyword id="KW-0028">Amino-acid biosynthesis</keyword>
<keyword id="KW-0061">Asparagine biosynthesis</keyword>
<keyword id="KW-0067">ATP-binding</keyword>
<keyword id="KW-0963">Cytoplasm</keyword>
<keyword id="KW-0436">Ligase</keyword>
<keyword id="KW-0547">Nucleotide-binding</keyword>
<proteinExistence type="inferred from homology"/>
<feature type="chain" id="PRO_1000017939" description="Aspartate--ammonia ligase">
    <location>
        <begin position="1"/>
        <end position="336"/>
    </location>
</feature>
<gene>
    <name evidence="1" type="primary">asnA</name>
    <name type="ordered locus">CPF_2233</name>
</gene>